<proteinExistence type="inferred from homology"/>
<organism>
    <name type="scientific">Beijerinckia indica subsp. indica (strain ATCC 9039 / DSM 1715 / NCIMB 8712)</name>
    <dbReference type="NCBI Taxonomy" id="395963"/>
    <lineage>
        <taxon>Bacteria</taxon>
        <taxon>Pseudomonadati</taxon>
        <taxon>Pseudomonadota</taxon>
        <taxon>Alphaproteobacteria</taxon>
        <taxon>Hyphomicrobiales</taxon>
        <taxon>Beijerinckiaceae</taxon>
        <taxon>Beijerinckia</taxon>
    </lineage>
</organism>
<gene>
    <name evidence="1" type="primary">secA</name>
    <name type="ordered locus">Bind_3254</name>
</gene>
<dbReference type="EC" id="7.4.2.8" evidence="1"/>
<dbReference type="EMBL" id="CP001016">
    <property type="protein sequence ID" value="ACB96814.1"/>
    <property type="molecule type" value="Genomic_DNA"/>
</dbReference>
<dbReference type="RefSeq" id="WP_012386162.1">
    <property type="nucleotide sequence ID" value="NC_010581.1"/>
</dbReference>
<dbReference type="SMR" id="B2ID49"/>
<dbReference type="STRING" id="395963.Bind_3254"/>
<dbReference type="KEGG" id="bid:Bind_3254"/>
<dbReference type="eggNOG" id="COG0653">
    <property type="taxonomic scope" value="Bacteria"/>
</dbReference>
<dbReference type="HOGENOM" id="CLU_005314_3_0_5"/>
<dbReference type="OrthoDB" id="9805579at2"/>
<dbReference type="Proteomes" id="UP000001695">
    <property type="component" value="Chromosome"/>
</dbReference>
<dbReference type="GO" id="GO:0031522">
    <property type="term" value="C:cell envelope Sec protein transport complex"/>
    <property type="evidence" value="ECO:0007669"/>
    <property type="project" value="TreeGrafter"/>
</dbReference>
<dbReference type="GO" id="GO:0005829">
    <property type="term" value="C:cytosol"/>
    <property type="evidence" value="ECO:0007669"/>
    <property type="project" value="TreeGrafter"/>
</dbReference>
<dbReference type="GO" id="GO:0005886">
    <property type="term" value="C:plasma membrane"/>
    <property type="evidence" value="ECO:0007669"/>
    <property type="project" value="UniProtKB-SubCell"/>
</dbReference>
<dbReference type="GO" id="GO:0005524">
    <property type="term" value="F:ATP binding"/>
    <property type="evidence" value="ECO:0007669"/>
    <property type="project" value="UniProtKB-UniRule"/>
</dbReference>
<dbReference type="GO" id="GO:0046872">
    <property type="term" value="F:metal ion binding"/>
    <property type="evidence" value="ECO:0007669"/>
    <property type="project" value="UniProtKB-KW"/>
</dbReference>
<dbReference type="GO" id="GO:0008564">
    <property type="term" value="F:protein-exporting ATPase activity"/>
    <property type="evidence" value="ECO:0007669"/>
    <property type="project" value="UniProtKB-EC"/>
</dbReference>
<dbReference type="GO" id="GO:0065002">
    <property type="term" value="P:intracellular protein transmembrane transport"/>
    <property type="evidence" value="ECO:0007669"/>
    <property type="project" value="UniProtKB-UniRule"/>
</dbReference>
<dbReference type="GO" id="GO:0017038">
    <property type="term" value="P:protein import"/>
    <property type="evidence" value="ECO:0007669"/>
    <property type="project" value="InterPro"/>
</dbReference>
<dbReference type="GO" id="GO:0006605">
    <property type="term" value="P:protein targeting"/>
    <property type="evidence" value="ECO:0007669"/>
    <property type="project" value="UniProtKB-UniRule"/>
</dbReference>
<dbReference type="GO" id="GO:0043952">
    <property type="term" value="P:protein transport by the Sec complex"/>
    <property type="evidence" value="ECO:0007669"/>
    <property type="project" value="TreeGrafter"/>
</dbReference>
<dbReference type="CDD" id="cd17928">
    <property type="entry name" value="DEXDc_SecA"/>
    <property type="match status" value="1"/>
</dbReference>
<dbReference type="CDD" id="cd18803">
    <property type="entry name" value="SF2_C_secA"/>
    <property type="match status" value="1"/>
</dbReference>
<dbReference type="FunFam" id="3.90.1440.10:FF:000001">
    <property type="entry name" value="Preprotein translocase subunit SecA"/>
    <property type="match status" value="1"/>
</dbReference>
<dbReference type="FunFam" id="1.10.3060.10:FF:000003">
    <property type="entry name" value="Protein translocase subunit SecA"/>
    <property type="match status" value="1"/>
</dbReference>
<dbReference type="FunFam" id="3.40.50.300:FF:000334">
    <property type="entry name" value="Protein translocase subunit SecA"/>
    <property type="match status" value="1"/>
</dbReference>
<dbReference type="FunFam" id="3.40.50.300:FF:001790">
    <property type="entry name" value="Protein translocase subunit SecA"/>
    <property type="match status" value="1"/>
</dbReference>
<dbReference type="Gene3D" id="3.10.450.50">
    <property type="match status" value="1"/>
</dbReference>
<dbReference type="Gene3D" id="1.10.3060.10">
    <property type="entry name" value="Helical scaffold and wing domains of SecA"/>
    <property type="match status" value="1"/>
</dbReference>
<dbReference type="Gene3D" id="3.40.50.300">
    <property type="entry name" value="P-loop containing nucleotide triphosphate hydrolases"/>
    <property type="match status" value="2"/>
</dbReference>
<dbReference type="Gene3D" id="3.90.1440.10">
    <property type="entry name" value="SecA, preprotein cross-linking domain"/>
    <property type="match status" value="1"/>
</dbReference>
<dbReference type="HAMAP" id="MF_01382">
    <property type="entry name" value="SecA"/>
    <property type="match status" value="1"/>
</dbReference>
<dbReference type="InterPro" id="IPR014001">
    <property type="entry name" value="Helicase_ATP-bd"/>
</dbReference>
<dbReference type="InterPro" id="IPR027417">
    <property type="entry name" value="P-loop_NTPase"/>
</dbReference>
<dbReference type="InterPro" id="IPR004027">
    <property type="entry name" value="SEC_C_motif"/>
</dbReference>
<dbReference type="InterPro" id="IPR000185">
    <property type="entry name" value="SecA"/>
</dbReference>
<dbReference type="InterPro" id="IPR020937">
    <property type="entry name" value="SecA_CS"/>
</dbReference>
<dbReference type="InterPro" id="IPR011115">
    <property type="entry name" value="SecA_DEAD"/>
</dbReference>
<dbReference type="InterPro" id="IPR014018">
    <property type="entry name" value="SecA_motor_DEAD"/>
</dbReference>
<dbReference type="InterPro" id="IPR011130">
    <property type="entry name" value="SecA_preprotein_X-link_dom"/>
</dbReference>
<dbReference type="InterPro" id="IPR044722">
    <property type="entry name" value="SecA_SF2_C"/>
</dbReference>
<dbReference type="InterPro" id="IPR011116">
    <property type="entry name" value="SecA_Wing/Scaffold"/>
</dbReference>
<dbReference type="InterPro" id="IPR036266">
    <property type="entry name" value="SecA_Wing/Scaffold_sf"/>
</dbReference>
<dbReference type="InterPro" id="IPR036670">
    <property type="entry name" value="SecA_X-link_sf"/>
</dbReference>
<dbReference type="NCBIfam" id="NF009538">
    <property type="entry name" value="PRK12904.1"/>
    <property type="match status" value="1"/>
</dbReference>
<dbReference type="NCBIfam" id="TIGR00963">
    <property type="entry name" value="secA"/>
    <property type="match status" value="1"/>
</dbReference>
<dbReference type="PANTHER" id="PTHR30612:SF0">
    <property type="entry name" value="CHLOROPLAST PROTEIN-TRANSPORTING ATPASE"/>
    <property type="match status" value="1"/>
</dbReference>
<dbReference type="PANTHER" id="PTHR30612">
    <property type="entry name" value="SECA INNER MEMBRANE COMPONENT OF SEC PROTEIN SECRETION SYSTEM"/>
    <property type="match status" value="1"/>
</dbReference>
<dbReference type="Pfam" id="PF21090">
    <property type="entry name" value="P-loop_SecA"/>
    <property type="match status" value="1"/>
</dbReference>
<dbReference type="Pfam" id="PF02810">
    <property type="entry name" value="SEC-C"/>
    <property type="match status" value="1"/>
</dbReference>
<dbReference type="Pfam" id="PF07517">
    <property type="entry name" value="SecA_DEAD"/>
    <property type="match status" value="1"/>
</dbReference>
<dbReference type="Pfam" id="PF01043">
    <property type="entry name" value="SecA_PP_bind"/>
    <property type="match status" value="1"/>
</dbReference>
<dbReference type="Pfam" id="PF07516">
    <property type="entry name" value="SecA_SW"/>
    <property type="match status" value="1"/>
</dbReference>
<dbReference type="PRINTS" id="PR00906">
    <property type="entry name" value="SECA"/>
</dbReference>
<dbReference type="SMART" id="SM00957">
    <property type="entry name" value="SecA_DEAD"/>
    <property type="match status" value="1"/>
</dbReference>
<dbReference type="SMART" id="SM00958">
    <property type="entry name" value="SecA_PP_bind"/>
    <property type="match status" value="1"/>
</dbReference>
<dbReference type="SUPFAM" id="SSF81886">
    <property type="entry name" value="Helical scaffold and wing domains of SecA"/>
    <property type="match status" value="1"/>
</dbReference>
<dbReference type="SUPFAM" id="SSF52540">
    <property type="entry name" value="P-loop containing nucleoside triphosphate hydrolases"/>
    <property type="match status" value="2"/>
</dbReference>
<dbReference type="SUPFAM" id="SSF81767">
    <property type="entry name" value="Pre-protein crosslinking domain of SecA"/>
    <property type="match status" value="1"/>
</dbReference>
<dbReference type="PROSITE" id="PS01312">
    <property type="entry name" value="SECA"/>
    <property type="match status" value="1"/>
</dbReference>
<dbReference type="PROSITE" id="PS51196">
    <property type="entry name" value="SECA_MOTOR_DEAD"/>
    <property type="match status" value="1"/>
</dbReference>
<comment type="function">
    <text evidence="1">Part of the Sec protein translocase complex. Interacts with the SecYEG preprotein conducting channel. Has a central role in coupling the hydrolysis of ATP to the transfer of proteins into and across the cell membrane, serving both as a receptor for the preprotein-SecB complex and as an ATP-driven molecular motor driving the stepwise translocation of polypeptide chains across the membrane.</text>
</comment>
<comment type="catalytic activity">
    <reaction evidence="1">
        <text>ATP + H2O + cellular proteinSide 1 = ADP + phosphate + cellular proteinSide 2.</text>
        <dbReference type="EC" id="7.4.2.8"/>
    </reaction>
</comment>
<comment type="cofactor">
    <cofactor evidence="1">
        <name>Zn(2+)</name>
        <dbReference type="ChEBI" id="CHEBI:29105"/>
    </cofactor>
    <text evidence="1">May bind 1 zinc ion per subunit.</text>
</comment>
<comment type="subunit">
    <text evidence="1">Monomer and homodimer. Part of the essential Sec protein translocation apparatus which comprises SecA, SecYEG and auxiliary proteins SecDF-YajC and YidC.</text>
</comment>
<comment type="subcellular location">
    <subcellularLocation>
        <location evidence="1">Cell inner membrane</location>
        <topology evidence="1">Peripheral membrane protein</topology>
        <orientation evidence="1">Cytoplasmic side</orientation>
    </subcellularLocation>
    <subcellularLocation>
        <location evidence="1">Cytoplasm</location>
    </subcellularLocation>
    <text evidence="1">Distribution is 50-50.</text>
</comment>
<comment type="similarity">
    <text evidence="1">Belongs to the SecA family.</text>
</comment>
<reference key="1">
    <citation type="journal article" date="2010" name="J. Bacteriol.">
        <title>Complete genome sequence of Beijerinckia indica subsp. indica.</title>
        <authorList>
            <person name="Tamas I."/>
            <person name="Dedysh S.N."/>
            <person name="Liesack W."/>
            <person name="Stott M.B."/>
            <person name="Alam M."/>
            <person name="Murrell J.C."/>
            <person name="Dunfield P.F."/>
        </authorList>
    </citation>
    <scope>NUCLEOTIDE SEQUENCE [LARGE SCALE GENOMIC DNA]</scope>
    <source>
        <strain>ATCC 9039 / DSM 1715 / NCIMB 8712</strain>
    </source>
</reference>
<accession>B2ID49</accession>
<feature type="chain" id="PRO_1000144976" description="Protein translocase subunit SecA">
    <location>
        <begin position="1"/>
        <end position="956"/>
    </location>
</feature>
<feature type="binding site" evidence="1">
    <location>
        <position position="87"/>
    </location>
    <ligand>
        <name>ATP</name>
        <dbReference type="ChEBI" id="CHEBI:30616"/>
    </ligand>
</feature>
<feature type="binding site" evidence="1">
    <location>
        <begin position="105"/>
        <end position="109"/>
    </location>
    <ligand>
        <name>ATP</name>
        <dbReference type="ChEBI" id="CHEBI:30616"/>
    </ligand>
</feature>
<feature type="binding site" evidence="1">
    <location>
        <position position="524"/>
    </location>
    <ligand>
        <name>ATP</name>
        <dbReference type="ChEBI" id="CHEBI:30616"/>
    </ligand>
</feature>
<feature type="binding site" evidence="1">
    <location>
        <position position="940"/>
    </location>
    <ligand>
        <name>Zn(2+)</name>
        <dbReference type="ChEBI" id="CHEBI:29105"/>
    </ligand>
</feature>
<feature type="binding site" evidence="1">
    <location>
        <position position="942"/>
    </location>
    <ligand>
        <name>Zn(2+)</name>
        <dbReference type="ChEBI" id="CHEBI:29105"/>
    </ligand>
</feature>
<feature type="binding site" evidence="1">
    <location>
        <position position="951"/>
    </location>
    <ligand>
        <name>Zn(2+)</name>
        <dbReference type="ChEBI" id="CHEBI:29105"/>
    </ligand>
</feature>
<feature type="binding site" evidence="1">
    <location>
        <position position="952"/>
    </location>
    <ligand>
        <name>Zn(2+)</name>
        <dbReference type="ChEBI" id="CHEBI:29105"/>
    </ligand>
</feature>
<keyword id="KW-0067">ATP-binding</keyword>
<keyword id="KW-0997">Cell inner membrane</keyword>
<keyword id="KW-1003">Cell membrane</keyword>
<keyword id="KW-0963">Cytoplasm</keyword>
<keyword id="KW-0472">Membrane</keyword>
<keyword id="KW-0479">Metal-binding</keyword>
<keyword id="KW-0547">Nucleotide-binding</keyword>
<keyword id="KW-0653">Protein transport</keyword>
<keyword id="KW-1185">Reference proteome</keyword>
<keyword id="KW-1278">Translocase</keyword>
<keyword id="KW-0811">Translocation</keyword>
<keyword id="KW-0813">Transport</keyword>
<keyword id="KW-0862">Zinc</keyword>
<evidence type="ECO:0000255" key="1">
    <source>
        <dbReference type="HAMAP-Rule" id="MF_01382"/>
    </source>
</evidence>
<name>SECA_BEII9</name>
<sequence>MWATLAKKIFGTANDRRLKGYRPKVAAINALEPEIQKLSDEELAAQTITLRAQLAEGKTLDDLIVPAFATVREAARRVLGQRHFDVQLIGGMVLHEGGIAEMRTGEGKTLVATLATYLNALAGQGVHVVTVNDYLARRDAEWMGQVYRFLGLSTGIIVHGLDDAQRREAYAADITYGTNNEFGFDYLRDNMKYELSHMVQRGHAFAIVDEVDSILIDEARTPLIISGPSDDKSDLYNLVDTLIPKLNDEDFELDEKQRSTNLTEAGNEHIEELLREIGALHDGSLYDAVNVTLVHHVNQALRAHKLFQRDKDYIERNGEIVIIDEFTGRMMPGRRYSEGLHQALEAKEHVQVQPENVTLASITFQNYFRLYKKLAGMTGTAATEADEFAEIYRLEVVSIPTNNPVRRHDEDDEVYRSGEEKLRAITREIEAAGQTLQPMLVGTTSIEKSEQLAAFMLQQGYKQIDFSEPKALQKLYAAARSGKPSKLFAVLNARFHEQEAYIVAEAGVPGAITIATNMAGRGTDIKLGGNVDMRVEQECASLPPGPDRDAKEAEIRAEVDSFRDQAIAAGGLYIIGTERHESRRIDNQLRGRSGRQGDPGRSKFFLSLKDDLMRIFGSDRMESMLLKLGLKEDEAIVHPWINKALEKAQQKVEARNFEMRKNILKYDNVMNDQRKVVFEQRREMMGQDSLEEMIHDMRTGVVDDLVGKFVPHDAYPEAWDIEGLTQGLETALNLALPLADWAKEEGITDEAMHERLQQAAETAYAERAERNGPDLMRYIEKQVVLQVLDHLWREHLVTLDHLRQVIGWRGLAQRDPLNEYKSEAFALFDELITQLRETTTAQLSRVEVAFAPSADQSPFETLAAAAPFDPVPAVPPLAASLALEGPTETGQTAVSFMPQQGVEAFNGRDVLVAAEPTIPTLERNADDPKSWGRVGRNEPCPCGSGKKYKHCHGMIS</sequence>
<protein>
    <recommendedName>
        <fullName evidence="1">Protein translocase subunit SecA</fullName>
        <ecNumber evidence="1">7.4.2.8</ecNumber>
    </recommendedName>
</protein>